<feature type="peptide" id="PRO_0000345083" description="Phenol-soluble modulin alpha 4 peptide">
    <location>
        <begin position="1"/>
        <end position="20"/>
    </location>
</feature>
<accession>P0C827</accession>
<protein>
    <recommendedName>
        <fullName>Phenol-soluble modulin alpha 4 peptide</fullName>
    </recommendedName>
</protein>
<gene>
    <name type="primary">psmA4</name>
    <name type="ordered locus">USA300HOU_0454.1</name>
</gene>
<dbReference type="EMBL" id="CP000730">
    <property type="status" value="NOT_ANNOTATED_CDS"/>
    <property type="molecule type" value="Genomic_DNA"/>
</dbReference>
<dbReference type="SMR" id="P0C827"/>
<dbReference type="GO" id="GO:0031640">
    <property type="term" value="P:killing of cells of another organism"/>
    <property type="evidence" value="ECO:0007669"/>
    <property type="project" value="UniProtKB-KW"/>
</dbReference>
<dbReference type="InterPro" id="IPR031429">
    <property type="entry name" value="PSM_alpha"/>
</dbReference>
<dbReference type="Pfam" id="PF17063">
    <property type="entry name" value="PSMalpha"/>
    <property type="match status" value="1"/>
</dbReference>
<organism>
    <name type="scientific">Staphylococcus aureus (strain USA300 / TCH1516)</name>
    <dbReference type="NCBI Taxonomy" id="451516"/>
    <lineage>
        <taxon>Bacteria</taxon>
        <taxon>Bacillati</taxon>
        <taxon>Bacillota</taxon>
        <taxon>Bacilli</taxon>
        <taxon>Bacillales</taxon>
        <taxon>Staphylococcaceae</taxon>
        <taxon>Staphylococcus</taxon>
    </lineage>
</organism>
<name>PSMA4_STAAT</name>
<reference key="1">
    <citation type="journal article" date="2007" name="BMC Microbiol.">
        <title>Subtle genetic changes enhance virulence of methicillin resistant and sensitive Staphylococcus aureus.</title>
        <authorList>
            <person name="Highlander S.K."/>
            <person name="Hulten K.G."/>
            <person name="Qin X."/>
            <person name="Jiang H."/>
            <person name="Yerrapragada S."/>
            <person name="Mason E.O. Jr."/>
            <person name="Shang Y."/>
            <person name="Williams T.M."/>
            <person name="Fortunov R.M."/>
            <person name="Liu Y."/>
            <person name="Igboeli O."/>
            <person name="Petrosino J."/>
            <person name="Tirumalai M."/>
            <person name="Uzman A."/>
            <person name="Fox G.E."/>
            <person name="Cardenas A.M."/>
            <person name="Muzny D.M."/>
            <person name="Hemphill L."/>
            <person name="Ding Y."/>
            <person name="Dugan S."/>
            <person name="Blyth P.R."/>
            <person name="Buhay C.J."/>
            <person name="Dinh H.H."/>
            <person name="Hawes A.C."/>
            <person name="Holder M."/>
            <person name="Kovar C.L."/>
            <person name="Lee S.L."/>
            <person name="Liu W."/>
            <person name="Nazareth L.V."/>
            <person name="Wang Q."/>
            <person name="Zhou J."/>
            <person name="Kaplan S.L."/>
            <person name="Weinstock G.M."/>
        </authorList>
    </citation>
    <scope>NUCLEOTIDE SEQUENCE [LARGE SCALE GENOMIC DNA]</scope>
    <source>
        <strain>USA300 / TCH1516</strain>
    </source>
</reference>
<proteinExistence type="inferred from homology"/>
<keyword id="KW-0204">Cytolysis</keyword>
<keyword id="KW-0843">Virulence</keyword>
<sequence>MAIVGTIIKIIKAIIDIFAK</sequence>
<comment type="function">
    <text evidence="1">Peptide which can recruit, activate and subsequently lyse human neutrophils, thus eliminating the main cellular defense against infection.</text>
</comment>
<comment type="similarity">
    <text evidence="2">Belongs to the phenol-soluble modulin alpha peptides family.</text>
</comment>
<evidence type="ECO:0000250" key="1">
    <source>
        <dbReference type="UniProtKB" id="A9JX08"/>
    </source>
</evidence>
<evidence type="ECO:0000305" key="2"/>